<reference key="1">
    <citation type="submission" date="2008-06" db="EMBL/GenBank/DDBJ databases">
        <title>Complete sequence of Pelodictyon phaeoclathratiforme BU-1.</title>
        <authorList>
            <consortium name="US DOE Joint Genome Institute"/>
            <person name="Lucas S."/>
            <person name="Copeland A."/>
            <person name="Lapidus A."/>
            <person name="Glavina del Rio T."/>
            <person name="Dalin E."/>
            <person name="Tice H."/>
            <person name="Bruce D."/>
            <person name="Goodwin L."/>
            <person name="Pitluck S."/>
            <person name="Schmutz J."/>
            <person name="Larimer F."/>
            <person name="Land M."/>
            <person name="Hauser L."/>
            <person name="Kyrpides N."/>
            <person name="Mikhailova N."/>
            <person name="Liu Z."/>
            <person name="Li T."/>
            <person name="Zhao F."/>
            <person name="Overmann J."/>
            <person name="Bryant D.A."/>
            <person name="Richardson P."/>
        </authorList>
    </citation>
    <scope>NUCLEOTIDE SEQUENCE [LARGE SCALE GENOMIC DNA]</scope>
    <source>
        <strain>DSM 5477 / BU-1</strain>
    </source>
</reference>
<protein>
    <recommendedName>
        <fullName evidence="1">Large ribosomal subunit protein bL20</fullName>
    </recommendedName>
    <alternativeName>
        <fullName evidence="2">50S ribosomal protein L20</fullName>
    </alternativeName>
</protein>
<organism>
    <name type="scientific">Pelodictyon phaeoclathratiforme (strain DSM 5477 / BU-1)</name>
    <dbReference type="NCBI Taxonomy" id="324925"/>
    <lineage>
        <taxon>Bacteria</taxon>
        <taxon>Pseudomonadati</taxon>
        <taxon>Chlorobiota</taxon>
        <taxon>Chlorobiia</taxon>
        <taxon>Chlorobiales</taxon>
        <taxon>Chlorobiaceae</taxon>
        <taxon>Chlorobium/Pelodictyon group</taxon>
        <taxon>Pelodictyon</taxon>
    </lineage>
</organism>
<name>RL20_PELPB</name>
<comment type="function">
    <text evidence="1">Binds directly to 23S ribosomal RNA and is necessary for the in vitro assembly process of the 50S ribosomal subunit. It is not involved in the protein synthesizing functions of that subunit.</text>
</comment>
<comment type="similarity">
    <text evidence="1">Belongs to the bacterial ribosomal protein bL20 family.</text>
</comment>
<dbReference type="EMBL" id="CP001110">
    <property type="protein sequence ID" value="ACF42511.1"/>
    <property type="molecule type" value="Genomic_DNA"/>
</dbReference>
<dbReference type="RefSeq" id="WP_012507009.1">
    <property type="nucleotide sequence ID" value="NC_011060.1"/>
</dbReference>
<dbReference type="SMR" id="B4SB90"/>
<dbReference type="STRING" id="324925.Ppha_0173"/>
<dbReference type="KEGG" id="pph:Ppha_0173"/>
<dbReference type="eggNOG" id="COG0292">
    <property type="taxonomic scope" value="Bacteria"/>
</dbReference>
<dbReference type="HOGENOM" id="CLU_123265_0_1_10"/>
<dbReference type="OrthoDB" id="9808966at2"/>
<dbReference type="Proteomes" id="UP000002724">
    <property type="component" value="Chromosome"/>
</dbReference>
<dbReference type="GO" id="GO:1990904">
    <property type="term" value="C:ribonucleoprotein complex"/>
    <property type="evidence" value="ECO:0007669"/>
    <property type="project" value="UniProtKB-KW"/>
</dbReference>
<dbReference type="GO" id="GO:0005840">
    <property type="term" value="C:ribosome"/>
    <property type="evidence" value="ECO:0007669"/>
    <property type="project" value="UniProtKB-KW"/>
</dbReference>
<dbReference type="GO" id="GO:0019843">
    <property type="term" value="F:rRNA binding"/>
    <property type="evidence" value="ECO:0007669"/>
    <property type="project" value="UniProtKB-UniRule"/>
</dbReference>
<dbReference type="GO" id="GO:0003735">
    <property type="term" value="F:structural constituent of ribosome"/>
    <property type="evidence" value="ECO:0007669"/>
    <property type="project" value="InterPro"/>
</dbReference>
<dbReference type="GO" id="GO:0000027">
    <property type="term" value="P:ribosomal large subunit assembly"/>
    <property type="evidence" value="ECO:0007669"/>
    <property type="project" value="UniProtKB-UniRule"/>
</dbReference>
<dbReference type="GO" id="GO:0006412">
    <property type="term" value="P:translation"/>
    <property type="evidence" value="ECO:0007669"/>
    <property type="project" value="InterPro"/>
</dbReference>
<dbReference type="CDD" id="cd07026">
    <property type="entry name" value="Ribosomal_L20"/>
    <property type="match status" value="1"/>
</dbReference>
<dbReference type="FunFam" id="1.10.1900.20:FF:000001">
    <property type="entry name" value="50S ribosomal protein L20"/>
    <property type="match status" value="1"/>
</dbReference>
<dbReference type="Gene3D" id="6.10.160.10">
    <property type="match status" value="1"/>
</dbReference>
<dbReference type="Gene3D" id="1.10.1900.20">
    <property type="entry name" value="Ribosomal protein L20"/>
    <property type="match status" value="1"/>
</dbReference>
<dbReference type="HAMAP" id="MF_00382">
    <property type="entry name" value="Ribosomal_bL20"/>
    <property type="match status" value="1"/>
</dbReference>
<dbReference type="InterPro" id="IPR005813">
    <property type="entry name" value="Ribosomal_bL20"/>
</dbReference>
<dbReference type="InterPro" id="IPR049946">
    <property type="entry name" value="RIBOSOMAL_L20_CS"/>
</dbReference>
<dbReference type="InterPro" id="IPR035566">
    <property type="entry name" value="Ribosomal_protein_bL20_C"/>
</dbReference>
<dbReference type="NCBIfam" id="TIGR01032">
    <property type="entry name" value="rplT_bact"/>
    <property type="match status" value="1"/>
</dbReference>
<dbReference type="PANTHER" id="PTHR10986">
    <property type="entry name" value="39S RIBOSOMAL PROTEIN L20"/>
    <property type="match status" value="1"/>
</dbReference>
<dbReference type="Pfam" id="PF00453">
    <property type="entry name" value="Ribosomal_L20"/>
    <property type="match status" value="1"/>
</dbReference>
<dbReference type="PRINTS" id="PR00062">
    <property type="entry name" value="RIBOSOMALL20"/>
</dbReference>
<dbReference type="SUPFAM" id="SSF74731">
    <property type="entry name" value="Ribosomal protein L20"/>
    <property type="match status" value="1"/>
</dbReference>
<dbReference type="PROSITE" id="PS00937">
    <property type="entry name" value="RIBOSOMAL_L20"/>
    <property type="match status" value="1"/>
</dbReference>
<feature type="chain" id="PRO_1000122350" description="Large ribosomal subunit protein bL20">
    <location>
        <begin position="1"/>
        <end position="115"/>
    </location>
</feature>
<accession>B4SB90</accession>
<keyword id="KW-1185">Reference proteome</keyword>
<keyword id="KW-0687">Ribonucleoprotein</keyword>
<keyword id="KW-0689">Ribosomal protein</keyword>
<keyword id="KW-0694">RNA-binding</keyword>
<keyword id="KW-0699">rRNA-binding</keyword>
<evidence type="ECO:0000255" key="1">
    <source>
        <dbReference type="HAMAP-Rule" id="MF_00382"/>
    </source>
</evidence>
<evidence type="ECO:0000305" key="2"/>
<gene>
    <name evidence="1" type="primary">rplT</name>
    <name type="ordered locus">Ppha_0173</name>
</gene>
<proteinExistence type="inferred from homology"/>
<sequence>MPKANNAVASKARRKRVLKKAKGFWGSRGNILTVVKHAVDKAEQYAYRDRRVKKRTFRSLWIMRINAAARLNGTTYSRMINAMLKKNVEIDRKALAEIAVKDPAAFTVIVKSLFE</sequence>